<comment type="function">
    <text evidence="1">Component of the cytochrome b6-f complex, which mediates electron transfer between photosystem II (PSII) and photosystem I (PSI), cyclic electron flow around PSI, and state transitions. PetG is required for either the stability or assembly of the cytochrome b6-f complex.</text>
</comment>
<comment type="subunit">
    <text evidence="1">The 4 large subunits of the cytochrome b6-f complex are cytochrome b6, subunit IV (17 kDa polypeptide, PetD), cytochrome f and the Rieske protein, while the 4 small subunits are PetG, PetL, PetM and PetN. The complex functions as a dimer.</text>
</comment>
<comment type="subcellular location">
    <subcellularLocation>
        <location evidence="1">Plastid</location>
        <location evidence="1">Chloroplast thylakoid membrane</location>
        <topology evidence="1">Single-pass membrane protein</topology>
    </subcellularLocation>
</comment>
<comment type="similarity">
    <text evidence="1">Belongs to the PetG family.</text>
</comment>
<evidence type="ECO:0000255" key="1">
    <source>
        <dbReference type="HAMAP-Rule" id="MF_00432"/>
    </source>
</evidence>
<proteinExistence type="inferred from homology"/>
<geneLocation type="chloroplast"/>
<name>PETG_NICSY</name>
<organism>
    <name type="scientific">Nicotiana sylvestris</name>
    <name type="common">Wood tobacco</name>
    <name type="synonym">South American tobacco</name>
    <dbReference type="NCBI Taxonomy" id="4096"/>
    <lineage>
        <taxon>Eukaryota</taxon>
        <taxon>Viridiplantae</taxon>
        <taxon>Streptophyta</taxon>
        <taxon>Embryophyta</taxon>
        <taxon>Tracheophyta</taxon>
        <taxon>Spermatophyta</taxon>
        <taxon>Magnoliopsida</taxon>
        <taxon>eudicotyledons</taxon>
        <taxon>Gunneridae</taxon>
        <taxon>Pentapetalae</taxon>
        <taxon>asterids</taxon>
        <taxon>lamiids</taxon>
        <taxon>Solanales</taxon>
        <taxon>Solanaceae</taxon>
        <taxon>Nicotianoideae</taxon>
        <taxon>Nicotianeae</taxon>
        <taxon>Nicotiana</taxon>
    </lineage>
</organism>
<protein>
    <recommendedName>
        <fullName evidence="1">Cytochrome b6-f complex subunit 5</fullName>
    </recommendedName>
    <alternativeName>
        <fullName evidence="1">Cytochrome b6-f complex subunit PetG</fullName>
    </alternativeName>
    <alternativeName>
        <fullName evidence="1">Cytochrome b6-f complex subunit V</fullName>
    </alternativeName>
</protein>
<gene>
    <name evidence="1" type="primary">petG</name>
</gene>
<reference key="1">
    <citation type="journal article" date="2006" name="Mol. Genet. Genomics">
        <title>The chloroplast genome of Nicotiana sylvestris and Nicotiana tomentosiformis: complete sequencing confirms that the Nicotiana sylvestris progenitor is the maternal genome donor of Nicotiana tabacum.</title>
        <authorList>
            <person name="Yukawa M."/>
            <person name="Tsudzuki T."/>
            <person name="Sugiura M."/>
        </authorList>
    </citation>
    <scope>NUCLEOTIDE SEQUENCE [LARGE SCALE GENOMIC DNA]</scope>
</reference>
<dbReference type="EMBL" id="AB237912">
    <property type="protein sequence ID" value="BAE46673.1"/>
    <property type="molecule type" value="Genomic_DNA"/>
</dbReference>
<dbReference type="RefSeq" id="YP_358698.1">
    <property type="nucleotide sequence ID" value="NC_007500.1"/>
</dbReference>
<dbReference type="SMR" id="Q3C1L0"/>
<dbReference type="GeneID" id="3735073"/>
<dbReference type="KEGG" id="nsy:3735073"/>
<dbReference type="OrthoDB" id="21085at4085"/>
<dbReference type="Proteomes" id="UP000189701">
    <property type="component" value="Chloroplast Pltd"/>
</dbReference>
<dbReference type="GO" id="GO:0009535">
    <property type="term" value="C:chloroplast thylakoid membrane"/>
    <property type="evidence" value="ECO:0007669"/>
    <property type="project" value="UniProtKB-SubCell"/>
</dbReference>
<dbReference type="GO" id="GO:0009512">
    <property type="term" value="C:cytochrome b6f complex"/>
    <property type="evidence" value="ECO:0007669"/>
    <property type="project" value="InterPro"/>
</dbReference>
<dbReference type="GO" id="GO:0045158">
    <property type="term" value="F:electron transporter, transferring electrons within cytochrome b6/f complex of photosystem II activity"/>
    <property type="evidence" value="ECO:0007669"/>
    <property type="project" value="UniProtKB-UniRule"/>
</dbReference>
<dbReference type="GO" id="GO:0017004">
    <property type="term" value="P:cytochrome complex assembly"/>
    <property type="evidence" value="ECO:0007669"/>
    <property type="project" value="UniProtKB-UniRule"/>
</dbReference>
<dbReference type="GO" id="GO:0015979">
    <property type="term" value="P:photosynthesis"/>
    <property type="evidence" value="ECO:0007669"/>
    <property type="project" value="UniProtKB-KW"/>
</dbReference>
<dbReference type="HAMAP" id="MF_00432">
    <property type="entry name" value="Cytb6_f_PetG"/>
    <property type="match status" value="1"/>
</dbReference>
<dbReference type="InterPro" id="IPR003683">
    <property type="entry name" value="Cyt_6/f_cplx_su5"/>
</dbReference>
<dbReference type="InterPro" id="IPR036099">
    <property type="entry name" value="Cyt_6/f_cplx_su5_sf"/>
</dbReference>
<dbReference type="NCBIfam" id="NF001907">
    <property type="entry name" value="PRK00665.1"/>
    <property type="match status" value="1"/>
</dbReference>
<dbReference type="Pfam" id="PF02529">
    <property type="entry name" value="PetG"/>
    <property type="match status" value="1"/>
</dbReference>
<dbReference type="PIRSF" id="PIRSF000034">
    <property type="entry name" value="Cyt_b6-f_V"/>
    <property type="match status" value="1"/>
</dbReference>
<dbReference type="SUPFAM" id="SSF103446">
    <property type="entry name" value="PetG subunit of the cytochrome b6f complex"/>
    <property type="match status" value="1"/>
</dbReference>
<accession>Q3C1L0</accession>
<sequence>MIEVFLFGIVLGLIPITLAGLFVTAYLQYRRGDQLDL</sequence>
<keyword id="KW-0150">Chloroplast</keyword>
<keyword id="KW-0249">Electron transport</keyword>
<keyword id="KW-0472">Membrane</keyword>
<keyword id="KW-0602">Photosynthesis</keyword>
<keyword id="KW-0934">Plastid</keyword>
<keyword id="KW-1185">Reference proteome</keyword>
<keyword id="KW-0793">Thylakoid</keyword>
<keyword id="KW-0812">Transmembrane</keyword>
<keyword id="KW-1133">Transmembrane helix</keyword>
<keyword id="KW-0813">Transport</keyword>
<feature type="chain" id="PRO_0000275497" description="Cytochrome b6-f complex subunit 5">
    <location>
        <begin position="1"/>
        <end position="37"/>
    </location>
</feature>
<feature type="transmembrane region" description="Helical" evidence="1">
    <location>
        <begin position="5"/>
        <end position="25"/>
    </location>
</feature>